<gene>
    <name evidence="1" type="primary">efp</name>
    <name type="ordered locus">BG0217</name>
</gene>
<feature type="chain" id="PRO_0000094207" description="Elongation factor P">
    <location>
        <begin position="1"/>
        <end position="192"/>
    </location>
</feature>
<keyword id="KW-0963">Cytoplasm</keyword>
<keyword id="KW-0251">Elongation factor</keyword>
<keyword id="KW-0648">Protein biosynthesis</keyword>
<comment type="function">
    <text evidence="1">Involved in peptide bond synthesis. Stimulates efficient translation and peptide-bond synthesis on native or reconstituted 70S ribosomes in vitro. Probably functions indirectly by altering the affinity of the ribosome for aminoacyl-tRNA, thus increasing their reactivity as acceptors for peptidyl transferase.</text>
</comment>
<comment type="pathway">
    <text evidence="1">Protein biosynthesis; polypeptide chain elongation.</text>
</comment>
<comment type="subcellular location">
    <subcellularLocation>
        <location evidence="1">Cytoplasm</location>
    </subcellularLocation>
</comment>
<comment type="similarity">
    <text evidence="1">Belongs to the elongation factor P family.</text>
</comment>
<organism>
    <name type="scientific">Borrelia garinii subsp. bavariensis (strain ATCC BAA-2496 / DSM 23469 / PBi)</name>
    <name type="common">Borreliella bavariensis</name>
    <dbReference type="NCBI Taxonomy" id="290434"/>
    <lineage>
        <taxon>Bacteria</taxon>
        <taxon>Pseudomonadati</taxon>
        <taxon>Spirochaetota</taxon>
        <taxon>Spirochaetia</taxon>
        <taxon>Spirochaetales</taxon>
        <taxon>Borreliaceae</taxon>
        <taxon>Borreliella</taxon>
    </lineage>
</organism>
<protein>
    <recommendedName>
        <fullName evidence="1">Elongation factor P</fullName>
        <shortName evidence="1">EF-P</shortName>
    </recommendedName>
</protein>
<sequence>MAVVKSSEIEKGSFLLIKGTPHIVLEREFSKTGRGGAIVRLKLKNLKNKFVIRETLKGADTAEAIEIYEVSAQYLYKDKDVLVFMDLETYDQVSLDLKESANFQDKVPFLQESETYALIMFDNVVIDIKLAPKIAFEVVEVEAAVKGDTVTNAMKNITLNTGLVVKAPLFINVGDKVLVNSETKEYAERIKS</sequence>
<dbReference type="EMBL" id="CP000013">
    <property type="protein sequence ID" value="AAU07071.1"/>
    <property type="molecule type" value="Genomic_DNA"/>
</dbReference>
<dbReference type="RefSeq" id="WP_011193559.1">
    <property type="nucleotide sequence ID" value="NZ_CP028872.1"/>
</dbReference>
<dbReference type="SMR" id="Q662F0"/>
<dbReference type="GeneID" id="45161008"/>
<dbReference type="KEGG" id="bga:BG0217"/>
<dbReference type="eggNOG" id="COG0231">
    <property type="taxonomic scope" value="Bacteria"/>
</dbReference>
<dbReference type="HOGENOM" id="CLU_074944_0_2_12"/>
<dbReference type="OrthoDB" id="9801844at2"/>
<dbReference type="UniPathway" id="UPA00345"/>
<dbReference type="Proteomes" id="UP000002276">
    <property type="component" value="Chromosome"/>
</dbReference>
<dbReference type="GO" id="GO:0005737">
    <property type="term" value="C:cytoplasm"/>
    <property type="evidence" value="ECO:0007669"/>
    <property type="project" value="UniProtKB-SubCell"/>
</dbReference>
<dbReference type="GO" id="GO:0003746">
    <property type="term" value="F:translation elongation factor activity"/>
    <property type="evidence" value="ECO:0007669"/>
    <property type="project" value="UniProtKB-UniRule"/>
</dbReference>
<dbReference type="GO" id="GO:0043043">
    <property type="term" value="P:peptide biosynthetic process"/>
    <property type="evidence" value="ECO:0007669"/>
    <property type="project" value="InterPro"/>
</dbReference>
<dbReference type="CDD" id="cd04470">
    <property type="entry name" value="S1_EF-P_repeat_1"/>
    <property type="match status" value="1"/>
</dbReference>
<dbReference type="CDD" id="cd05794">
    <property type="entry name" value="S1_EF-P_repeat_2"/>
    <property type="match status" value="1"/>
</dbReference>
<dbReference type="FunFam" id="2.40.50.140:FF:000004">
    <property type="entry name" value="Elongation factor P"/>
    <property type="match status" value="1"/>
</dbReference>
<dbReference type="Gene3D" id="2.30.30.30">
    <property type="match status" value="1"/>
</dbReference>
<dbReference type="Gene3D" id="2.40.50.140">
    <property type="entry name" value="Nucleic acid-binding proteins"/>
    <property type="match status" value="2"/>
</dbReference>
<dbReference type="HAMAP" id="MF_00141">
    <property type="entry name" value="EF_P"/>
    <property type="match status" value="1"/>
</dbReference>
<dbReference type="InterPro" id="IPR015365">
    <property type="entry name" value="Elong-fact-P_C"/>
</dbReference>
<dbReference type="InterPro" id="IPR012340">
    <property type="entry name" value="NA-bd_OB-fold"/>
</dbReference>
<dbReference type="InterPro" id="IPR014722">
    <property type="entry name" value="Rib_uL2_dom2"/>
</dbReference>
<dbReference type="InterPro" id="IPR020599">
    <property type="entry name" value="Transl_elong_fac_P/YeiP"/>
</dbReference>
<dbReference type="InterPro" id="IPR013185">
    <property type="entry name" value="Transl_elong_KOW-like"/>
</dbReference>
<dbReference type="InterPro" id="IPR001059">
    <property type="entry name" value="Transl_elong_P/YeiP_cen"/>
</dbReference>
<dbReference type="InterPro" id="IPR011768">
    <property type="entry name" value="Transl_elongation_fac_P"/>
</dbReference>
<dbReference type="InterPro" id="IPR008991">
    <property type="entry name" value="Translation_prot_SH3-like_sf"/>
</dbReference>
<dbReference type="NCBIfam" id="TIGR00038">
    <property type="entry name" value="efp"/>
    <property type="match status" value="1"/>
</dbReference>
<dbReference type="NCBIfam" id="NF001810">
    <property type="entry name" value="PRK00529.1"/>
    <property type="match status" value="1"/>
</dbReference>
<dbReference type="PANTHER" id="PTHR30053">
    <property type="entry name" value="ELONGATION FACTOR P"/>
    <property type="match status" value="1"/>
</dbReference>
<dbReference type="PANTHER" id="PTHR30053:SF14">
    <property type="entry name" value="TRANSLATION ELONGATION FACTOR KOW-LIKE DOMAIN-CONTAINING PROTEIN"/>
    <property type="match status" value="1"/>
</dbReference>
<dbReference type="Pfam" id="PF01132">
    <property type="entry name" value="EFP"/>
    <property type="match status" value="1"/>
</dbReference>
<dbReference type="Pfam" id="PF08207">
    <property type="entry name" value="EFP_N"/>
    <property type="match status" value="1"/>
</dbReference>
<dbReference type="Pfam" id="PF09285">
    <property type="entry name" value="Elong-fact-P_C"/>
    <property type="match status" value="1"/>
</dbReference>
<dbReference type="PIRSF" id="PIRSF005901">
    <property type="entry name" value="EF-P"/>
    <property type="match status" value="1"/>
</dbReference>
<dbReference type="SMART" id="SM01185">
    <property type="entry name" value="EFP"/>
    <property type="match status" value="1"/>
</dbReference>
<dbReference type="SMART" id="SM00841">
    <property type="entry name" value="Elong-fact-P_C"/>
    <property type="match status" value="1"/>
</dbReference>
<dbReference type="SUPFAM" id="SSF50249">
    <property type="entry name" value="Nucleic acid-binding proteins"/>
    <property type="match status" value="2"/>
</dbReference>
<dbReference type="SUPFAM" id="SSF50104">
    <property type="entry name" value="Translation proteins SH3-like domain"/>
    <property type="match status" value="1"/>
</dbReference>
<accession>Q662F0</accession>
<reference key="1">
    <citation type="journal article" date="2004" name="Nucleic Acids Res.">
        <title>Comparative analysis of the Borrelia garinii genome.</title>
        <authorList>
            <person name="Gloeckner G."/>
            <person name="Lehmann R."/>
            <person name="Romualdi A."/>
            <person name="Pradella S."/>
            <person name="Schulte-Spechtel U."/>
            <person name="Schilhabel M."/>
            <person name="Wilske B."/>
            <person name="Suehnel J."/>
            <person name="Platzer M."/>
        </authorList>
    </citation>
    <scope>NUCLEOTIDE SEQUENCE [LARGE SCALE GENOMIC DNA]</scope>
    <source>
        <strain>ATCC BAA-2496 / DSM 23469 / PBi</strain>
    </source>
</reference>
<evidence type="ECO:0000255" key="1">
    <source>
        <dbReference type="HAMAP-Rule" id="MF_00141"/>
    </source>
</evidence>
<name>EFP_BORGP</name>
<proteinExistence type="inferred from homology"/>